<keyword id="KW-0472">Membrane</keyword>
<keyword id="KW-0496">Mitochondrion</keyword>
<keyword id="KW-0999">Mitochondrion inner membrane</keyword>
<keyword id="KW-1185">Reference proteome</keyword>
<keyword id="KW-0809">Transit peptide</keyword>
<accession>D3ZN43</accession>
<organism>
    <name type="scientific">Rattus norvegicus</name>
    <name type="common">Rat</name>
    <dbReference type="NCBI Taxonomy" id="10116"/>
    <lineage>
        <taxon>Eukaryota</taxon>
        <taxon>Metazoa</taxon>
        <taxon>Chordata</taxon>
        <taxon>Craniata</taxon>
        <taxon>Vertebrata</taxon>
        <taxon>Euteleostomi</taxon>
        <taxon>Mammalia</taxon>
        <taxon>Eutheria</taxon>
        <taxon>Euarchontoglires</taxon>
        <taxon>Glires</taxon>
        <taxon>Rodentia</taxon>
        <taxon>Myomorpha</taxon>
        <taxon>Muroidea</taxon>
        <taxon>Muridae</taxon>
        <taxon>Murinae</taxon>
        <taxon>Rattus</taxon>
    </lineage>
</organism>
<protein>
    <recommendedName>
        <fullName>NADH dehydrogenase (ubiquinone) complex I, assembly factor 6</fullName>
    </recommendedName>
</protein>
<sequence length="333" mass="38515">MATSMLGSVPGPRPFGLAGLFRRRPPRDPWERVRRLPRLSAVRRSVAAASGPGIPDSHLYCLELLRKRDYESYLCSLLFPAECQRSASALRAFNVELAQVKDSVSEKTIGLMRMQFWRKAVEDMFCDNPPHQPVAMELWKAVKRHNLTKRWLLRIIDEREKNLDDKAYRSIRELETYAENTQSSLLYLTLEVLGVKDVHADHAASHIGKAQGIVTCLRATPYHSSRRQVFLPMDVCVQHGVSQEDFLRRNQDKNVRDVVYDIASQAHLHLKHARSFHSRVPAEAFPAFLQTVSLEDYLKKIQRVDFDIFHPSLQQKNTLLPLSLYIQSWRKRY</sequence>
<reference key="1">
    <citation type="journal article" date="2004" name="Nature">
        <title>Genome sequence of the Brown Norway rat yields insights into mammalian evolution.</title>
        <authorList>
            <person name="Gibbs R.A."/>
            <person name="Weinstock G.M."/>
            <person name="Metzker M.L."/>
            <person name="Muzny D.M."/>
            <person name="Sodergren E.J."/>
            <person name="Scherer S."/>
            <person name="Scott G."/>
            <person name="Steffen D."/>
            <person name="Worley K.C."/>
            <person name="Burch P.E."/>
            <person name="Okwuonu G."/>
            <person name="Hines S."/>
            <person name="Lewis L."/>
            <person name="Deramo C."/>
            <person name="Delgado O."/>
            <person name="Dugan-Rocha S."/>
            <person name="Miner G."/>
            <person name="Morgan M."/>
            <person name="Hawes A."/>
            <person name="Gill R."/>
            <person name="Holt R.A."/>
            <person name="Adams M.D."/>
            <person name="Amanatides P.G."/>
            <person name="Baden-Tillson H."/>
            <person name="Barnstead M."/>
            <person name="Chin S."/>
            <person name="Evans C.A."/>
            <person name="Ferriera S."/>
            <person name="Fosler C."/>
            <person name="Glodek A."/>
            <person name="Gu Z."/>
            <person name="Jennings D."/>
            <person name="Kraft C.L."/>
            <person name="Nguyen T."/>
            <person name="Pfannkoch C.M."/>
            <person name="Sitter C."/>
            <person name="Sutton G.G."/>
            <person name="Venter J.C."/>
            <person name="Woodage T."/>
            <person name="Smith D."/>
            <person name="Lee H.-M."/>
            <person name="Gustafson E."/>
            <person name="Cahill P."/>
            <person name="Kana A."/>
            <person name="Doucette-Stamm L."/>
            <person name="Weinstock K."/>
            <person name="Fechtel K."/>
            <person name="Weiss R.B."/>
            <person name="Dunn D.M."/>
            <person name="Green E.D."/>
            <person name="Blakesley R.W."/>
            <person name="Bouffard G.G."/>
            <person name="De Jong P.J."/>
            <person name="Osoegawa K."/>
            <person name="Zhu B."/>
            <person name="Marra M."/>
            <person name="Schein J."/>
            <person name="Bosdet I."/>
            <person name="Fjell C."/>
            <person name="Jones S."/>
            <person name="Krzywinski M."/>
            <person name="Mathewson C."/>
            <person name="Siddiqui A."/>
            <person name="Wye N."/>
            <person name="McPherson J."/>
            <person name="Zhao S."/>
            <person name="Fraser C.M."/>
            <person name="Shetty J."/>
            <person name="Shatsman S."/>
            <person name="Geer K."/>
            <person name="Chen Y."/>
            <person name="Abramzon S."/>
            <person name="Nierman W.C."/>
            <person name="Havlak P.H."/>
            <person name="Chen R."/>
            <person name="Durbin K.J."/>
            <person name="Egan A."/>
            <person name="Ren Y."/>
            <person name="Song X.-Z."/>
            <person name="Li B."/>
            <person name="Liu Y."/>
            <person name="Qin X."/>
            <person name="Cawley S."/>
            <person name="Cooney A.J."/>
            <person name="D'Souza L.M."/>
            <person name="Martin K."/>
            <person name="Wu J.Q."/>
            <person name="Gonzalez-Garay M.L."/>
            <person name="Jackson A.R."/>
            <person name="Kalafus K.J."/>
            <person name="McLeod M.P."/>
            <person name="Milosavljevic A."/>
            <person name="Virk D."/>
            <person name="Volkov A."/>
            <person name="Wheeler D.A."/>
            <person name="Zhang Z."/>
            <person name="Bailey J.A."/>
            <person name="Eichler E.E."/>
            <person name="Tuzun E."/>
            <person name="Birney E."/>
            <person name="Mongin E."/>
            <person name="Ureta-Vidal A."/>
            <person name="Woodwark C."/>
            <person name="Zdobnov E."/>
            <person name="Bork P."/>
            <person name="Suyama M."/>
            <person name="Torrents D."/>
            <person name="Alexandersson M."/>
            <person name="Trask B.J."/>
            <person name="Young J.M."/>
            <person name="Huang H."/>
            <person name="Wang H."/>
            <person name="Xing H."/>
            <person name="Daniels S."/>
            <person name="Gietzen D."/>
            <person name="Schmidt J."/>
            <person name="Stevens K."/>
            <person name="Vitt U."/>
            <person name="Wingrove J."/>
            <person name="Camara F."/>
            <person name="Mar Alba M."/>
            <person name="Abril J.F."/>
            <person name="Guigo R."/>
            <person name="Smit A."/>
            <person name="Dubchak I."/>
            <person name="Rubin E.M."/>
            <person name="Couronne O."/>
            <person name="Poliakov A."/>
            <person name="Huebner N."/>
            <person name="Ganten D."/>
            <person name="Goesele C."/>
            <person name="Hummel O."/>
            <person name="Kreitler T."/>
            <person name="Lee Y.-A."/>
            <person name="Monti J."/>
            <person name="Schulz H."/>
            <person name="Zimdahl H."/>
            <person name="Himmelbauer H."/>
            <person name="Lehrach H."/>
            <person name="Jacob H.J."/>
            <person name="Bromberg S."/>
            <person name="Gullings-Handley J."/>
            <person name="Jensen-Seaman M.I."/>
            <person name="Kwitek A.E."/>
            <person name="Lazar J."/>
            <person name="Pasko D."/>
            <person name="Tonellato P.J."/>
            <person name="Twigger S."/>
            <person name="Ponting C.P."/>
            <person name="Duarte J.M."/>
            <person name="Rice S."/>
            <person name="Goodstadt L."/>
            <person name="Beatson S.A."/>
            <person name="Emes R.D."/>
            <person name="Winter E.E."/>
            <person name="Webber C."/>
            <person name="Brandt P."/>
            <person name="Nyakatura G."/>
            <person name="Adetobi M."/>
            <person name="Chiaromonte F."/>
            <person name="Elnitski L."/>
            <person name="Eswara P."/>
            <person name="Hardison R.C."/>
            <person name="Hou M."/>
            <person name="Kolbe D."/>
            <person name="Makova K."/>
            <person name="Miller W."/>
            <person name="Nekrutenko A."/>
            <person name="Riemer C."/>
            <person name="Schwartz S."/>
            <person name="Taylor J."/>
            <person name="Yang S."/>
            <person name="Zhang Y."/>
            <person name="Lindpaintner K."/>
            <person name="Andrews T.D."/>
            <person name="Caccamo M."/>
            <person name="Clamp M."/>
            <person name="Clarke L."/>
            <person name="Curwen V."/>
            <person name="Durbin R.M."/>
            <person name="Eyras E."/>
            <person name="Searle S.M."/>
            <person name="Cooper G.M."/>
            <person name="Batzoglou S."/>
            <person name="Brudno M."/>
            <person name="Sidow A."/>
            <person name="Stone E.A."/>
            <person name="Payseur B.A."/>
            <person name="Bourque G."/>
            <person name="Lopez-Otin C."/>
            <person name="Puente X.S."/>
            <person name="Chakrabarti K."/>
            <person name="Chatterji S."/>
            <person name="Dewey C."/>
            <person name="Pachter L."/>
            <person name="Bray N."/>
            <person name="Yap V.B."/>
            <person name="Caspi A."/>
            <person name="Tesler G."/>
            <person name="Pevzner P.A."/>
            <person name="Haussler D."/>
            <person name="Roskin K.M."/>
            <person name="Baertsch R."/>
            <person name="Clawson H."/>
            <person name="Furey T.S."/>
            <person name="Hinrichs A.S."/>
            <person name="Karolchik D."/>
            <person name="Kent W.J."/>
            <person name="Rosenbloom K.R."/>
            <person name="Trumbower H."/>
            <person name="Weirauch M."/>
            <person name="Cooper D.N."/>
            <person name="Stenson P.D."/>
            <person name="Ma B."/>
            <person name="Brent M."/>
            <person name="Arumugam M."/>
            <person name="Shteynberg D."/>
            <person name="Copley R.R."/>
            <person name="Taylor M.S."/>
            <person name="Riethman H."/>
            <person name="Mudunuri U."/>
            <person name="Peterson J."/>
            <person name="Guyer M."/>
            <person name="Felsenfeld A."/>
            <person name="Old S."/>
            <person name="Mockrin S."/>
            <person name="Collins F.S."/>
        </authorList>
    </citation>
    <scope>NUCLEOTIDE SEQUENCE [LARGE SCALE GENOMIC DNA]</scope>
    <source>
        <strain>Brown Norway</strain>
    </source>
</reference>
<reference key="2">
    <citation type="submission" date="2005-07" db="EMBL/GenBank/DDBJ databases">
        <authorList>
            <person name="Mural R.J."/>
            <person name="Adams M.D."/>
            <person name="Myers E.W."/>
            <person name="Smith H.O."/>
            <person name="Venter J.C."/>
        </authorList>
    </citation>
    <scope>NUCLEOTIDE SEQUENCE [LARGE SCALE GENOMIC DNA]</scope>
</reference>
<gene>
    <name type="primary">Ndufaf6</name>
</gene>
<evidence type="ECO:0000250" key="1"/>
<evidence type="ECO:0000250" key="2">
    <source>
        <dbReference type="UniProtKB" id="Q330K2"/>
    </source>
</evidence>
<evidence type="ECO:0000255" key="3"/>
<evidence type="ECO:0000305" key="4"/>
<feature type="transit peptide" description="Mitochondrion" evidence="3">
    <location>
        <begin position="1"/>
        <end position="44"/>
    </location>
</feature>
<feature type="chain" id="PRO_0000418069" description="NADH dehydrogenase (ubiquinone) complex I, assembly factor 6">
    <location>
        <begin position="45"/>
        <end position="333"/>
    </location>
</feature>
<proteinExistence type="inferred from homology"/>
<comment type="function">
    <text evidence="2">Involved in the assembly of mitochondrial NADH:ubiquinone oxidoreductase complex (complex I) at early stages. May play a role in the biogenesis of complex I subunit MT-ND1.</text>
</comment>
<comment type="subcellular location">
    <subcellularLocation>
        <location evidence="1">Mitochondrion inner membrane</location>
    </subcellularLocation>
    <text evidence="1">Peripherally localized on the matrix face of the mitochondrial inner membrane.</text>
</comment>
<comment type="similarity">
    <text evidence="4">Belongs to the NDUFAF6 family.</text>
</comment>
<dbReference type="EMBL" id="AABR03042038">
    <property type="status" value="NOT_ANNOTATED_CDS"/>
    <property type="molecule type" value="Genomic_DNA"/>
</dbReference>
<dbReference type="EMBL" id="AABR03046646">
    <property type="status" value="NOT_ANNOTATED_CDS"/>
    <property type="molecule type" value="Genomic_DNA"/>
</dbReference>
<dbReference type="EMBL" id="CH473984">
    <property type="protein sequence ID" value="EDM11670.1"/>
    <property type="molecule type" value="Genomic_DNA"/>
</dbReference>
<dbReference type="RefSeq" id="NP_001263370.1">
    <property type="nucleotide sequence ID" value="NM_001276441.1"/>
</dbReference>
<dbReference type="SMR" id="D3ZN43"/>
<dbReference type="FunCoup" id="D3ZN43">
    <property type="interactions" value="2920"/>
</dbReference>
<dbReference type="STRING" id="10116.ENSRNOP00000058286"/>
<dbReference type="PhosphoSitePlus" id="D3ZN43"/>
<dbReference type="PaxDb" id="10116-ENSRNOP00000058286"/>
<dbReference type="PeptideAtlas" id="D3ZN43"/>
<dbReference type="Ensembl" id="ENSRNOT00000061569.5">
    <property type="protein sequence ID" value="ENSRNOP00000058286.4"/>
    <property type="gene ID" value="ENSRNOG00000040040.5"/>
</dbReference>
<dbReference type="GeneID" id="297821"/>
<dbReference type="KEGG" id="rno:297821"/>
<dbReference type="UCSC" id="RGD:1309085">
    <property type="organism name" value="rat"/>
</dbReference>
<dbReference type="AGR" id="RGD:1309085"/>
<dbReference type="CTD" id="137682"/>
<dbReference type="RGD" id="1309085">
    <property type="gene designation" value="Ndufaf6"/>
</dbReference>
<dbReference type="eggNOG" id="KOG4411">
    <property type="taxonomic scope" value="Eukaryota"/>
</dbReference>
<dbReference type="GeneTree" id="ENSGT00510000048688"/>
<dbReference type="HOGENOM" id="CLU_037269_6_0_1"/>
<dbReference type="InParanoid" id="D3ZN43"/>
<dbReference type="OMA" id="MINAREQ"/>
<dbReference type="OrthoDB" id="30557at9989"/>
<dbReference type="PhylomeDB" id="D3ZN43"/>
<dbReference type="TreeFam" id="TF300084"/>
<dbReference type="Reactome" id="R-RNO-6799198">
    <property type="pathway name" value="Complex I biogenesis"/>
</dbReference>
<dbReference type="PRO" id="PR:D3ZN43"/>
<dbReference type="Proteomes" id="UP000002494">
    <property type="component" value="Chromosome 5"/>
</dbReference>
<dbReference type="Proteomes" id="UP000234681">
    <property type="component" value="Chromosome 5"/>
</dbReference>
<dbReference type="GO" id="GO:0005743">
    <property type="term" value="C:mitochondrial inner membrane"/>
    <property type="evidence" value="ECO:0000250"/>
    <property type="project" value="UniProtKB"/>
</dbReference>
<dbReference type="GO" id="GO:0005739">
    <property type="term" value="C:mitochondrion"/>
    <property type="evidence" value="ECO:0000318"/>
    <property type="project" value="GO_Central"/>
</dbReference>
<dbReference type="GO" id="GO:0009058">
    <property type="term" value="P:biosynthetic process"/>
    <property type="evidence" value="ECO:0007669"/>
    <property type="project" value="InterPro"/>
</dbReference>
<dbReference type="GO" id="GO:0032981">
    <property type="term" value="P:mitochondrial respiratory chain complex I assembly"/>
    <property type="evidence" value="ECO:0000250"/>
    <property type="project" value="UniProtKB"/>
</dbReference>
<dbReference type="FunFam" id="1.10.600.10:FF:000013">
    <property type="entry name" value="NADH dehydrogenase (ubiquinone) complex I, assembly factor 6"/>
    <property type="match status" value="1"/>
</dbReference>
<dbReference type="Gene3D" id="1.10.600.10">
    <property type="entry name" value="Farnesyl Diphosphate Synthase"/>
    <property type="match status" value="1"/>
</dbReference>
<dbReference type="InterPro" id="IPR008949">
    <property type="entry name" value="Isoprenoid_synthase_dom_sf"/>
</dbReference>
<dbReference type="InterPro" id="IPR002060">
    <property type="entry name" value="Squ/phyt_synthse"/>
</dbReference>
<dbReference type="PANTHER" id="PTHR21181">
    <property type="match status" value="1"/>
</dbReference>
<dbReference type="PANTHER" id="PTHR21181:SF13">
    <property type="entry name" value="NADH DEHYDROGENASE (UBIQUINONE) COMPLEX I, ASSEMBLY FACTOR 6"/>
    <property type="match status" value="1"/>
</dbReference>
<dbReference type="Pfam" id="PF00494">
    <property type="entry name" value="SQS_PSY"/>
    <property type="match status" value="1"/>
</dbReference>
<dbReference type="SUPFAM" id="SSF48576">
    <property type="entry name" value="Terpenoid synthases"/>
    <property type="match status" value="1"/>
</dbReference>
<name>NDUF6_RAT</name>